<reference key="1">
    <citation type="journal article" date="2002" name="Plant Cell">
        <title>The homologous ABI5 and EEL transcription factors function antagonistically to fine-tune gene expression during late embryogenesis.</title>
        <authorList>
            <person name="Bensmihen S."/>
            <person name="Rippa S."/>
            <person name="Lambert G."/>
            <person name="Jublot D."/>
            <person name="Pautot V."/>
            <person name="Granier F."/>
            <person name="Giraudat J."/>
            <person name="Parcy F."/>
        </authorList>
    </citation>
    <scope>NUCLEOTIDE SEQUENCE [MRNA]</scope>
</reference>
<reference key="2">
    <citation type="journal article" date="2002" name="Plant Physiol.">
        <title>Arabidopsis ABI5 subfamily members have distinct DNA-binding and transcriptional activities.</title>
        <authorList>
            <person name="Kim S.Y."/>
            <person name="Ma J."/>
            <person name="Perret P."/>
            <person name="Li Z."/>
            <person name="Thomas T.L."/>
        </authorList>
    </citation>
    <scope>NUCLEOTIDE SEQUENCE [MRNA]</scope>
    <scope>TISSUE SPECIFICITY</scope>
    <scope>DNA-BINDING</scope>
    <scope>HETERODIMERIZATION</scope>
</reference>
<reference key="3">
    <citation type="journal article" date="2000" name="Nature">
        <title>Sequence and analysis of chromosome 3 of the plant Arabidopsis thaliana.</title>
        <authorList>
            <person name="Salanoubat M."/>
            <person name="Lemcke K."/>
            <person name="Rieger M."/>
            <person name="Ansorge W."/>
            <person name="Unseld M."/>
            <person name="Fartmann B."/>
            <person name="Valle G."/>
            <person name="Bloecker H."/>
            <person name="Perez-Alonso M."/>
            <person name="Obermaier B."/>
            <person name="Delseny M."/>
            <person name="Boutry M."/>
            <person name="Grivell L.A."/>
            <person name="Mache R."/>
            <person name="Puigdomenech P."/>
            <person name="De Simone V."/>
            <person name="Choisne N."/>
            <person name="Artiguenave F."/>
            <person name="Robert C."/>
            <person name="Brottier P."/>
            <person name="Wincker P."/>
            <person name="Cattolico L."/>
            <person name="Weissenbach J."/>
            <person name="Saurin W."/>
            <person name="Quetier F."/>
            <person name="Schaefer M."/>
            <person name="Mueller-Auer S."/>
            <person name="Gabel C."/>
            <person name="Fuchs M."/>
            <person name="Benes V."/>
            <person name="Wurmbach E."/>
            <person name="Drzonek H."/>
            <person name="Erfle H."/>
            <person name="Jordan N."/>
            <person name="Bangert S."/>
            <person name="Wiedelmann R."/>
            <person name="Kranz H."/>
            <person name="Voss H."/>
            <person name="Holland R."/>
            <person name="Brandt P."/>
            <person name="Nyakatura G."/>
            <person name="Vezzi A."/>
            <person name="D'Angelo M."/>
            <person name="Pallavicini A."/>
            <person name="Toppo S."/>
            <person name="Simionati B."/>
            <person name="Conrad A."/>
            <person name="Hornischer K."/>
            <person name="Kauer G."/>
            <person name="Loehnert T.-H."/>
            <person name="Nordsiek G."/>
            <person name="Reichelt J."/>
            <person name="Scharfe M."/>
            <person name="Schoen O."/>
            <person name="Bargues M."/>
            <person name="Terol J."/>
            <person name="Climent J."/>
            <person name="Navarro P."/>
            <person name="Collado C."/>
            <person name="Perez-Perez A."/>
            <person name="Ottenwaelder B."/>
            <person name="Duchemin D."/>
            <person name="Cooke R."/>
            <person name="Laudie M."/>
            <person name="Berger-Llauro C."/>
            <person name="Purnelle B."/>
            <person name="Masuy D."/>
            <person name="de Haan M."/>
            <person name="Maarse A.C."/>
            <person name="Alcaraz J.-P."/>
            <person name="Cottet A."/>
            <person name="Casacuberta E."/>
            <person name="Monfort A."/>
            <person name="Argiriou A."/>
            <person name="Flores M."/>
            <person name="Liguori R."/>
            <person name="Vitale D."/>
            <person name="Mannhaupt G."/>
            <person name="Haase D."/>
            <person name="Schoof H."/>
            <person name="Rudd S."/>
            <person name="Zaccaria P."/>
            <person name="Mewes H.-W."/>
            <person name="Mayer K.F.X."/>
            <person name="Kaul S."/>
            <person name="Town C.D."/>
            <person name="Koo H.L."/>
            <person name="Tallon L.J."/>
            <person name="Jenkins J."/>
            <person name="Rooney T."/>
            <person name="Rizzo M."/>
            <person name="Walts A."/>
            <person name="Utterback T."/>
            <person name="Fujii C.Y."/>
            <person name="Shea T.P."/>
            <person name="Creasy T.H."/>
            <person name="Haas B."/>
            <person name="Maiti R."/>
            <person name="Wu D."/>
            <person name="Peterson J."/>
            <person name="Van Aken S."/>
            <person name="Pai G."/>
            <person name="Militscher J."/>
            <person name="Sellers P."/>
            <person name="Gill J.E."/>
            <person name="Feldblyum T.V."/>
            <person name="Preuss D."/>
            <person name="Lin X."/>
            <person name="Nierman W.C."/>
            <person name="Salzberg S.L."/>
            <person name="White O."/>
            <person name="Venter J.C."/>
            <person name="Fraser C.M."/>
            <person name="Kaneko T."/>
            <person name="Nakamura Y."/>
            <person name="Sato S."/>
            <person name="Kato T."/>
            <person name="Asamizu E."/>
            <person name="Sasamoto S."/>
            <person name="Kimura T."/>
            <person name="Idesawa K."/>
            <person name="Kawashima K."/>
            <person name="Kishida Y."/>
            <person name="Kiyokawa C."/>
            <person name="Kohara M."/>
            <person name="Matsumoto M."/>
            <person name="Matsuno A."/>
            <person name="Muraki A."/>
            <person name="Nakayama S."/>
            <person name="Nakazaki N."/>
            <person name="Shinpo S."/>
            <person name="Takeuchi C."/>
            <person name="Wada T."/>
            <person name="Watanabe A."/>
            <person name="Yamada M."/>
            <person name="Yasuda M."/>
            <person name="Tabata S."/>
        </authorList>
    </citation>
    <scope>NUCLEOTIDE SEQUENCE [LARGE SCALE GENOMIC DNA]</scope>
    <source>
        <strain>cv. Columbia</strain>
    </source>
</reference>
<reference key="4">
    <citation type="journal article" date="2017" name="Plant J.">
        <title>Araport11: a complete reannotation of the Arabidopsis thaliana reference genome.</title>
        <authorList>
            <person name="Cheng C.Y."/>
            <person name="Krishnakumar V."/>
            <person name="Chan A.P."/>
            <person name="Thibaud-Nissen F."/>
            <person name="Schobel S."/>
            <person name="Town C.D."/>
        </authorList>
    </citation>
    <scope>GENOME REANNOTATION</scope>
    <source>
        <strain>cv. Columbia</strain>
    </source>
</reference>
<reference key="5">
    <citation type="journal article" date="2003" name="Science">
        <title>Empirical analysis of transcriptional activity in the Arabidopsis genome.</title>
        <authorList>
            <person name="Yamada K."/>
            <person name="Lim J."/>
            <person name="Dale J.M."/>
            <person name="Chen H."/>
            <person name="Shinn P."/>
            <person name="Palm C.J."/>
            <person name="Southwick A.M."/>
            <person name="Wu H.C."/>
            <person name="Kim C.J."/>
            <person name="Nguyen M."/>
            <person name="Pham P.K."/>
            <person name="Cheuk R.F."/>
            <person name="Karlin-Newmann G."/>
            <person name="Liu S.X."/>
            <person name="Lam B."/>
            <person name="Sakano H."/>
            <person name="Wu T."/>
            <person name="Yu G."/>
            <person name="Miranda M."/>
            <person name="Quach H.L."/>
            <person name="Tripp M."/>
            <person name="Chang C.H."/>
            <person name="Lee J.M."/>
            <person name="Toriumi M.J."/>
            <person name="Chan M.M."/>
            <person name="Tang C.C."/>
            <person name="Onodera C.S."/>
            <person name="Deng J.M."/>
            <person name="Akiyama K."/>
            <person name="Ansari Y."/>
            <person name="Arakawa T."/>
            <person name="Banh J."/>
            <person name="Banno F."/>
            <person name="Bowser L."/>
            <person name="Brooks S.Y."/>
            <person name="Carninci P."/>
            <person name="Chao Q."/>
            <person name="Choy N."/>
            <person name="Enju A."/>
            <person name="Goldsmith A.D."/>
            <person name="Gurjal M."/>
            <person name="Hansen N.F."/>
            <person name="Hayashizaki Y."/>
            <person name="Johnson-Hopson C."/>
            <person name="Hsuan V.W."/>
            <person name="Iida K."/>
            <person name="Karnes M."/>
            <person name="Khan S."/>
            <person name="Koesema E."/>
            <person name="Ishida J."/>
            <person name="Jiang P.X."/>
            <person name="Jones T."/>
            <person name="Kawai J."/>
            <person name="Kamiya A."/>
            <person name="Meyers C."/>
            <person name="Nakajima M."/>
            <person name="Narusaka M."/>
            <person name="Seki M."/>
            <person name="Sakurai T."/>
            <person name="Satou M."/>
            <person name="Tamse R."/>
            <person name="Vaysberg M."/>
            <person name="Wallender E.K."/>
            <person name="Wong C."/>
            <person name="Yamamura Y."/>
            <person name="Yuan S."/>
            <person name="Shinozaki K."/>
            <person name="Davis R.W."/>
            <person name="Theologis A."/>
            <person name="Ecker J.R."/>
        </authorList>
    </citation>
    <scope>NUCLEOTIDE SEQUENCE [LARGE SCALE MRNA]</scope>
    <source>
        <strain>cv. Columbia</strain>
    </source>
</reference>
<reference key="6">
    <citation type="journal article" date="2002" name="Trends Plant Sci.">
        <title>bZIP transcription factors in Arabidopsis.</title>
        <authorList>
            <person name="Jakoby M."/>
            <person name="Weisshaar B."/>
            <person name="Droege-Laser W."/>
            <person name="Vicente-Carbajosa J."/>
            <person name="Tiedemann J."/>
            <person name="Kroj T."/>
            <person name="Parcy F."/>
        </authorList>
    </citation>
    <scope>GENE FAMILY</scope>
    <scope>NOMENCLATURE</scope>
</reference>
<reference key="7">
    <citation type="journal article" date="2005" name="J. Exp. Bot.">
        <title>Characterization of three homologous basic leucine zipper transcription factors (bZIP) of the ABI5 family during Arabidopsis thaliana embryo maturation.</title>
        <authorList>
            <person name="Bensmihen S."/>
            <person name="Giraudat J."/>
            <person name="Parcy F."/>
        </authorList>
    </citation>
    <scope>SUBCELLULAR LOCATION</scope>
    <scope>DEVELOPMENTAL STAGE</scope>
</reference>
<reference key="8">
    <citation type="journal article" date="2008" name="Plant Mol. Biol.">
        <title>A small plant-specific protein family of ABI five binding proteins (AFPs) regulates stress response in germinating Arabidopsis seeds and seedlings.</title>
        <authorList>
            <person name="Garcia M.E."/>
            <person name="Lynch T.J."/>
            <person name="Peeters J."/>
            <person name="Snowden C."/>
            <person name="Finkelstein R.R."/>
        </authorList>
    </citation>
    <scope>INTERACTION WITH AFP1; AFP2 AND AFP3</scope>
</reference>
<protein>
    <recommendedName>
        <fullName>ABSCISIC ACID-INSENSITIVE 5-like protein 1</fullName>
    </recommendedName>
    <alternativeName>
        <fullName>Dc3 promoter-binding factor 2</fullName>
        <shortName>AtDPBF2</shortName>
    </alternativeName>
    <alternativeName>
        <fullName>bZIP transcription factor 67</fullName>
        <shortName>AtbZIP67</shortName>
    </alternativeName>
</protein>
<name>AI5L1_ARATH</name>
<dbReference type="EMBL" id="AJ419600">
    <property type="protein sequence ID" value="CAD11867.1"/>
    <property type="molecule type" value="mRNA"/>
</dbReference>
<dbReference type="EMBL" id="AF334207">
    <property type="protein sequence ID" value="AAK19600.1"/>
    <property type="molecule type" value="mRNA"/>
</dbReference>
<dbReference type="EMBL" id="AL353818">
    <property type="protein sequence ID" value="CAB88528.1"/>
    <property type="status" value="ALT_SEQ"/>
    <property type="molecule type" value="Genomic_DNA"/>
</dbReference>
<dbReference type="EMBL" id="CP002686">
    <property type="protein sequence ID" value="AEE77905.1"/>
    <property type="molecule type" value="Genomic_DNA"/>
</dbReference>
<dbReference type="EMBL" id="BT002923">
    <property type="protein sequence ID" value="AAO22739.1"/>
    <property type="molecule type" value="mRNA"/>
</dbReference>
<dbReference type="EMBL" id="BT004342">
    <property type="protein sequence ID" value="AAO42336.1"/>
    <property type="molecule type" value="mRNA"/>
</dbReference>
<dbReference type="PIR" id="T48926">
    <property type="entry name" value="T48926"/>
</dbReference>
<dbReference type="RefSeq" id="NP_566870.1">
    <property type="nucleotide sequence ID" value="NM_114314.5"/>
</dbReference>
<dbReference type="SMR" id="Q8RYD6"/>
<dbReference type="BioGRID" id="8891">
    <property type="interactions" value="12"/>
</dbReference>
<dbReference type="FunCoup" id="Q8RYD6">
    <property type="interactions" value="292"/>
</dbReference>
<dbReference type="IntAct" id="Q8RYD6">
    <property type="interactions" value="11"/>
</dbReference>
<dbReference type="STRING" id="3702.Q8RYD6"/>
<dbReference type="PaxDb" id="3702-AT3G44460.1"/>
<dbReference type="ProteomicsDB" id="244918"/>
<dbReference type="EnsemblPlants" id="AT3G44460.1">
    <property type="protein sequence ID" value="AT3G44460.1"/>
    <property type="gene ID" value="AT3G44460"/>
</dbReference>
<dbReference type="GeneID" id="823571"/>
<dbReference type="Gramene" id="AT3G44460.1">
    <property type="protein sequence ID" value="AT3G44460.1"/>
    <property type="gene ID" value="AT3G44460"/>
</dbReference>
<dbReference type="KEGG" id="ath:AT3G44460"/>
<dbReference type="Araport" id="AT3G44460"/>
<dbReference type="TAIR" id="AT3G44460">
    <property type="gene designation" value="DPBF2"/>
</dbReference>
<dbReference type="eggNOG" id="ENOG502QV9T">
    <property type="taxonomic scope" value="Eukaryota"/>
</dbReference>
<dbReference type="HOGENOM" id="CLU_043238_1_0_1"/>
<dbReference type="InParanoid" id="Q8RYD6"/>
<dbReference type="OMA" id="FRIKKRI"/>
<dbReference type="PhylomeDB" id="Q8RYD6"/>
<dbReference type="PRO" id="PR:Q8RYD6"/>
<dbReference type="Proteomes" id="UP000006548">
    <property type="component" value="Chromosome 3"/>
</dbReference>
<dbReference type="ExpressionAtlas" id="Q8RYD6">
    <property type="expression patterns" value="baseline and differential"/>
</dbReference>
<dbReference type="GO" id="GO:0005634">
    <property type="term" value="C:nucleus"/>
    <property type="evidence" value="ECO:0000314"/>
    <property type="project" value="TAIR"/>
</dbReference>
<dbReference type="GO" id="GO:0003700">
    <property type="term" value="F:DNA-binding transcription factor activity"/>
    <property type="evidence" value="ECO:0000250"/>
    <property type="project" value="TAIR"/>
</dbReference>
<dbReference type="GO" id="GO:0000976">
    <property type="term" value="F:transcription cis-regulatory region binding"/>
    <property type="evidence" value="ECO:0000353"/>
    <property type="project" value="TAIR"/>
</dbReference>
<dbReference type="GO" id="GO:0009738">
    <property type="term" value="P:abscisic acid-activated signaling pathway"/>
    <property type="evidence" value="ECO:0007669"/>
    <property type="project" value="UniProtKB-KW"/>
</dbReference>
<dbReference type="GO" id="GO:0045893">
    <property type="term" value="P:positive regulation of DNA-templated transcription"/>
    <property type="evidence" value="ECO:0000314"/>
    <property type="project" value="TAIR"/>
</dbReference>
<dbReference type="Gene3D" id="1.20.5.170">
    <property type="match status" value="1"/>
</dbReference>
<dbReference type="InterPro" id="IPR004827">
    <property type="entry name" value="bZIP"/>
</dbReference>
<dbReference type="InterPro" id="IPR043452">
    <property type="entry name" value="BZIP46-like"/>
</dbReference>
<dbReference type="InterPro" id="IPR046347">
    <property type="entry name" value="bZIP_sf"/>
</dbReference>
<dbReference type="PANTHER" id="PTHR22952:SF395">
    <property type="entry name" value="ABSCISIC ACID-INSENSITIVE 5-LIKE PROTEIN 1"/>
    <property type="match status" value="1"/>
</dbReference>
<dbReference type="PANTHER" id="PTHR22952">
    <property type="entry name" value="CAMP-RESPONSE ELEMENT BINDING PROTEIN-RELATED"/>
    <property type="match status" value="1"/>
</dbReference>
<dbReference type="Pfam" id="PF00170">
    <property type="entry name" value="bZIP_1"/>
    <property type="match status" value="1"/>
</dbReference>
<dbReference type="SMART" id="SM00338">
    <property type="entry name" value="BRLZ"/>
    <property type="match status" value="1"/>
</dbReference>
<dbReference type="SUPFAM" id="SSF57959">
    <property type="entry name" value="Leucine zipper domain"/>
    <property type="match status" value="1"/>
</dbReference>
<dbReference type="PROSITE" id="PS50217">
    <property type="entry name" value="BZIP"/>
    <property type="match status" value="1"/>
</dbReference>
<dbReference type="PROSITE" id="PS00036">
    <property type="entry name" value="BZIP_BASIC"/>
    <property type="match status" value="1"/>
</dbReference>
<organism>
    <name type="scientific">Arabidopsis thaliana</name>
    <name type="common">Mouse-ear cress</name>
    <dbReference type="NCBI Taxonomy" id="3702"/>
    <lineage>
        <taxon>Eukaryota</taxon>
        <taxon>Viridiplantae</taxon>
        <taxon>Streptophyta</taxon>
        <taxon>Embryophyta</taxon>
        <taxon>Tracheophyta</taxon>
        <taxon>Spermatophyta</taxon>
        <taxon>Magnoliopsida</taxon>
        <taxon>eudicotyledons</taxon>
        <taxon>Gunneridae</taxon>
        <taxon>Pentapetalae</taxon>
        <taxon>rosids</taxon>
        <taxon>malvids</taxon>
        <taxon>Brassicales</taxon>
        <taxon>Brassicaceae</taxon>
        <taxon>Camelineae</taxon>
        <taxon>Arabidopsis</taxon>
    </lineage>
</organism>
<evidence type="ECO:0000250" key="1"/>
<evidence type="ECO:0000250" key="2">
    <source>
        <dbReference type="UniProtKB" id="Q9M7Q2"/>
    </source>
</evidence>
<evidence type="ECO:0000255" key="3"/>
<evidence type="ECO:0000255" key="4">
    <source>
        <dbReference type="PROSITE-ProRule" id="PRU00978"/>
    </source>
</evidence>
<evidence type="ECO:0000256" key="5">
    <source>
        <dbReference type="SAM" id="MobiDB-lite"/>
    </source>
</evidence>
<evidence type="ECO:0000269" key="6">
    <source>
    </source>
</evidence>
<evidence type="ECO:0000269" key="7">
    <source>
    </source>
</evidence>
<evidence type="ECO:0000305" key="8"/>
<sequence length="331" mass="37665">MSVFESETSNFHVYNNHEIQTQPQMQTFLSEEEPVGRQNSILSLTLDEIQMKSGKSFGAMNMDEFLANLWTTVEENDNEGGGAHNDGEKPAVLPRQGSLSLPVPLCKKTVDEVWLEIQNGVQQHPPSSNSGQNSAENIRRQQTLGEITLEDFLVKAGVVQEPLKTTMRMSSSDFGYNPEFGVGLHCQNQNNYGDNRSVYSENRPFYSVLGESSSCMTGNGRSNQYLTGLDAFRIKKRIIDGPPEILMERRQRRMIKNRESAARSRARRQAYTVELELELNNLTEENTKLKEIVEENEKKRRQEIISRSKQVTKEKSGDKLRKIRRMASAGW</sequence>
<proteinExistence type="evidence at protein level"/>
<keyword id="KW-0938">Abscisic acid signaling pathway</keyword>
<keyword id="KW-0010">Activator</keyword>
<keyword id="KW-0238">DNA-binding</keyword>
<keyword id="KW-0539">Nucleus</keyword>
<keyword id="KW-0597">Phosphoprotein</keyword>
<keyword id="KW-1185">Reference proteome</keyword>
<keyword id="KW-0804">Transcription</keyword>
<keyword id="KW-0805">Transcription regulation</keyword>
<comment type="function">
    <text evidence="1">Could participate in abscisic acid-regulated gene expression during seed development.</text>
</comment>
<comment type="subunit">
    <text>DNA-binding heterodimer with AREB3/DPBF3 or EEL/DPBF4. Interacts with the AFP proteins AFP1, AFP2 and AFP3.</text>
</comment>
<comment type="subcellular location">
    <subcellularLocation>
        <location evidence="4 7">Nucleus</location>
    </subcellularLocation>
</comment>
<comment type="tissue specificity">
    <text evidence="6">Predominantly expressed in seeds.</text>
</comment>
<comment type="developmental stage">
    <text evidence="7">Expressed in embryo during the latest stages of seed maturation.</text>
</comment>
<comment type="similarity">
    <text evidence="8">Belongs to the bZIP family. ABI5 subfamily.</text>
</comment>
<comment type="sequence caution" evidence="8">
    <conflict type="erroneous gene model prediction">
        <sequence resource="EMBL-CDS" id="CAB88528"/>
    </conflict>
</comment>
<accession>Q8RYD6</accession>
<accession>Q9C5Q4</accession>
<accession>Q9LXP1</accession>
<gene>
    <name type="primary">DPBF2</name>
    <name type="synonym">BZIP67</name>
    <name type="ordered locus">At3g44460</name>
    <name type="ORF">F14L2.10</name>
</gene>
<feature type="chain" id="PRO_0000369606" description="ABSCISIC ACID-INSENSITIVE 5-like protein 1">
    <location>
        <begin position="1"/>
        <end position="331"/>
    </location>
</feature>
<feature type="domain" description="bZIP" evidence="4">
    <location>
        <begin position="247"/>
        <end position="310"/>
    </location>
</feature>
<feature type="region of interest" description="Basic motif" evidence="4">
    <location>
        <begin position="249"/>
        <end position="268"/>
    </location>
</feature>
<feature type="region of interest" description="Leucine-zipper" evidence="4">
    <location>
        <begin position="275"/>
        <end position="289"/>
    </location>
</feature>
<feature type="region of interest" description="Disordered" evidence="5">
    <location>
        <begin position="296"/>
        <end position="331"/>
    </location>
</feature>
<feature type="compositionally biased region" description="Basic and acidic residues" evidence="5">
    <location>
        <begin position="296"/>
        <end position="320"/>
    </location>
</feature>
<feature type="modified residue" description="Phosphoserine" evidence="3">
    <location>
        <position position="40"/>
    </location>
</feature>
<feature type="modified residue" description="Phosphoserine" evidence="2">
    <location>
        <position position="98"/>
    </location>
</feature>
<feature type="modified residue" description="Phosphothreonine" evidence="3">
    <location>
        <position position="143"/>
    </location>
</feature>
<feature type="sequence conflict" description="In Ref. 2; AAK19600." evidence="8" ref="2">
    <original>A</original>
    <variation>D</variation>
    <location>
        <position position="135"/>
    </location>
</feature>
<feature type="sequence conflict" description="In Ref. 2; AAK19600." evidence="8" ref="2">
    <original>V</original>
    <variation>M</variation>
    <location>
        <position position="311"/>
    </location>
</feature>